<evidence type="ECO:0000250" key="1">
    <source>
        <dbReference type="UniProtKB" id="P14727"/>
    </source>
</evidence>
<evidence type="ECO:0000250" key="2">
    <source>
        <dbReference type="UniProtKB" id="Q68A49"/>
    </source>
</evidence>
<evidence type="ECO:0000256" key="3">
    <source>
        <dbReference type="SAM" id="MobiDB-lite"/>
    </source>
</evidence>
<evidence type="ECO:0000269" key="4">
    <source>
    </source>
</evidence>
<evidence type="ECO:0000269" key="5">
    <source>
    </source>
</evidence>
<evidence type="ECO:0000269" key="6">
    <source>
    </source>
</evidence>
<evidence type="ECO:0000269" key="7">
    <source>
    </source>
</evidence>
<evidence type="ECO:0000303" key="8">
    <source>
    </source>
</evidence>
<evidence type="ECO:0000303" key="9">
    <source>
    </source>
</evidence>
<evidence type="ECO:0000303" key="10">
    <source>
    </source>
</evidence>
<evidence type="ECO:0000303" key="11">
    <source>
    </source>
</evidence>
<evidence type="ECO:0000305" key="12"/>
<accession>Q8XYE3</accession>
<keyword id="KW-0238">DNA-binding</keyword>
<keyword id="KW-1048">Host nucleus</keyword>
<keyword id="KW-1185">Reference proteome</keyword>
<keyword id="KW-0677">Repeat</keyword>
<keyword id="KW-0964">Secreted</keyword>
<keyword id="KW-0804">Transcription</keyword>
<keyword id="KW-0805">Transcription regulation</keyword>
<protein>
    <recommendedName>
        <fullName evidence="12">TAL effector protein Brg11</fullName>
    </recommendedName>
</protein>
<feature type="chain" id="PRO_0000430627" description="TAL effector protein Brg11">
    <location>
        <begin position="1"/>
        <end position="1245"/>
    </location>
</feature>
<feature type="repeat" description="Cryptic repeat -1" evidence="9 10">
    <location>
        <begin position="286"/>
        <end position="320"/>
    </location>
</feature>
<feature type="repeat" description="Cryptic repeat 0" evidence="9 10">
    <location>
        <begin position="321"/>
        <end position="354"/>
    </location>
</feature>
<feature type="repeat" description="Core repeat 1" evidence="8 9">
    <location>
        <begin position="355"/>
        <end position="389"/>
    </location>
</feature>
<feature type="repeat" description="Core repeat 2" evidence="8 9">
    <location>
        <begin position="390"/>
        <end position="424"/>
    </location>
</feature>
<feature type="repeat" description="Core repeat 3" evidence="8 9">
    <location>
        <begin position="425"/>
        <end position="459"/>
    </location>
</feature>
<feature type="repeat" description="Core repeat 4" evidence="8 9">
    <location>
        <begin position="460"/>
        <end position="494"/>
    </location>
</feature>
<feature type="repeat" description="Core repeat 5" evidence="8 9">
    <location>
        <begin position="495"/>
        <end position="529"/>
    </location>
</feature>
<feature type="repeat" description="Core repeat 6" evidence="8 9">
    <location>
        <begin position="530"/>
        <end position="564"/>
    </location>
</feature>
<feature type="repeat" description="Core repeat 7" evidence="8 9">
    <location>
        <begin position="565"/>
        <end position="599"/>
    </location>
</feature>
<feature type="repeat" description="Core repeat 8" evidence="8 9">
    <location>
        <begin position="600"/>
        <end position="634"/>
    </location>
</feature>
<feature type="repeat" description="Core repeat 9" evidence="8 9">
    <location>
        <begin position="635"/>
        <end position="669"/>
    </location>
</feature>
<feature type="repeat" description="Core repeat 10" evidence="8 9">
    <location>
        <begin position="670"/>
        <end position="704"/>
    </location>
</feature>
<feature type="repeat" description="Core repeat 11" evidence="8 9">
    <location>
        <begin position="705"/>
        <end position="739"/>
    </location>
</feature>
<feature type="repeat" description="Core repeat 12" evidence="8 9">
    <location>
        <begin position="740"/>
        <end position="774"/>
    </location>
</feature>
<feature type="repeat" description="Core repeat 13" evidence="8 9">
    <location>
        <begin position="775"/>
        <end position="809"/>
    </location>
</feature>
<feature type="repeat" description="Core repeat 14" evidence="8 9">
    <location>
        <begin position="810"/>
        <end position="844"/>
    </location>
</feature>
<feature type="repeat" description="Core repeat 15" evidence="8 9">
    <location>
        <begin position="845"/>
        <end position="879"/>
    </location>
</feature>
<feature type="repeat" description="Core repeat 16" evidence="8 9">
    <location>
        <begin position="880"/>
        <end position="914"/>
    </location>
</feature>
<feature type="repeat" description="Cryptic repeat +1" evidence="10">
    <location>
        <begin position="915"/>
        <end position="948"/>
    </location>
</feature>
<feature type="repeat" description="Cryptic repeat +2" evidence="10">
    <location>
        <begin position="949"/>
        <end position="982"/>
    </location>
</feature>
<feature type="region of interest" description="Disordered" evidence="3">
    <location>
        <begin position="1"/>
        <end position="87"/>
    </location>
</feature>
<feature type="region of interest" description="Disordered" evidence="3">
    <location>
        <begin position="173"/>
        <end position="205"/>
    </location>
</feature>
<feature type="region of interest" description="Disordered" evidence="3">
    <location>
        <begin position="1096"/>
        <end position="1138"/>
    </location>
</feature>
<feature type="region of interest" description="Activation domain" evidence="10">
    <location>
        <begin position="1237"/>
        <end position="1245"/>
    </location>
</feature>
<feature type="short sequence motif" description="Nuclear localization signal 1" evidence="2">
    <location>
        <begin position="185"/>
        <end position="191"/>
    </location>
</feature>
<feature type="short sequence motif" description="Nuclear localization signal 2" evidence="2">
    <location>
        <begin position="980"/>
        <end position="983"/>
    </location>
</feature>
<feature type="short sequence motif" description="Nuclear localization signal 3" evidence="2">
    <location>
        <begin position="1108"/>
        <end position="1111"/>
    </location>
</feature>
<feature type="short sequence motif" description="Nuclear localization signal 4" evidence="2">
    <location>
        <begin position="1145"/>
        <end position="1148"/>
    </location>
</feature>
<feature type="compositionally biased region" description="Pro residues" evidence="3">
    <location>
        <begin position="67"/>
        <end position="87"/>
    </location>
</feature>
<feature type="mutagenesis site" description="Decreased promoter activation in plants; when associated with N-720." evidence="7">
    <original>K</original>
    <variation>N</variation>
    <location>
        <position position="615"/>
    </location>
</feature>
<feature type="mutagenesis site" description="Increased promoter activation in plants." evidence="7">
    <original>N</original>
    <variation>K</variation>
    <location>
        <position position="685"/>
    </location>
</feature>
<feature type="mutagenesis site" description="Decreased promoter activation in plants; when associated with N-615." evidence="7">
    <original>K</original>
    <variation>N</variation>
    <location>
        <position position="720"/>
    </location>
</feature>
<feature type="mutagenesis site" description="Loss of transcription activation by an AvrBs3-Brg11 chimera in plants." evidence="7">
    <location>
        <begin position="1213"/>
        <end position="1245"/>
    </location>
</feature>
<dbReference type="EMBL" id="AL646052">
    <property type="protein sequence ID" value="CAD15517.1"/>
    <property type="molecule type" value="Genomic_DNA"/>
</dbReference>
<dbReference type="SMR" id="Q8XYE3"/>
<dbReference type="STRING" id="267608.RSc1815"/>
<dbReference type="EnsemblBacteria" id="CAD15517">
    <property type="protein sequence ID" value="CAD15517"/>
    <property type="gene ID" value="RSc1815"/>
</dbReference>
<dbReference type="KEGG" id="rso:RSc1815"/>
<dbReference type="PATRIC" id="fig|267608.8.peg.1857"/>
<dbReference type="eggNOG" id="COG2201">
    <property type="taxonomic scope" value="Bacteria"/>
</dbReference>
<dbReference type="HOGENOM" id="CLU_003229_1_0_4"/>
<dbReference type="PHI-base" id="PHI:2922"/>
<dbReference type="PHI-base" id="PHI:5143"/>
<dbReference type="PHI-base" id="PHI:5179"/>
<dbReference type="Proteomes" id="UP000001436">
    <property type="component" value="Chromosome"/>
</dbReference>
<dbReference type="GO" id="GO:0005576">
    <property type="term" value="C:extracellular region"/>
    <property type="evidence" value="ECO:0007669"/>
    <property type="project" value="UniProtKB-SubCell"/>
</dbReference>
<dbReference type="GO" id="GO:0042025">
    <property type="term" value="C:host cell nucleus"/>
    <property type="evidence" value="ECO:0007669"/>
    <property type="project" value="UniProtKB-SubCell"/>
</dbReference>
<dbReference type="GO" id="GO:0003677">
    <property type="term" value="F:DNA binding"/>
    <property type="evidence" value="ECO:0007669"/>
    <property type="project" value="UniProtKB-KW"/>
</dbReference>
<dbReference type="Gene3D" id="6.10.140.500">
    <property type="match status" value="10"/>
</dbReference>
<dbReference type="InterPro" id="IPR005042">
    <property type="entry name" value="TAL_effector_rpt"/>
</dbReference>
<dbReference type="PANTHER" id="PTHR48125">
    <property type="entry name" value="LP07818P1"/>
    <property type="match status" value="1"/>
</dbReference>
<dbReference type="PANTHER" id="PTHR48125:SF10">
    <property type="entry name" value="OS12G0136300 PROTEIN"/>
    <property type="match status" value="1"/>
</dbReference>
<dbReference type="Pfam" id="PF03377">
    <property type="entry name" value="TAL_effector"/>
    <property type="match status" value="18"/>
</dbReference>
<comment type="function">
    <text evidence="5 7">Exported into plant cells, where it is targeted to the nucleus and probably acts as a transcription factor. Binds DNA in a sequence-specific manner. May contribute to plant pathogenicity.</text>
</comment>
<comment type="subcellular location">
    <subcellularLocation>
        <location evidence="1">Secreted</location>
    </subcellularLocation>
    <subcellularLocation>
        <location evidence="6 7">Host nucleus</location>
    </subcellularLocation>
    <text evidence="2">Secreted via type III secretion system (T3SS).</text>
</comment>
<comment type="induction">
    <text evidence="4">Regulated by hrpB, which controls the type III secretion system.</text>
</comment>
<comment type="domain">
    <text evidence="7 9">The central DNA-binding region is composed of 16 tandem core repeats with 1 base-specifying residue (BSR residue 13, also called repeat variable diresidue, RVD, residues 12 and 13). The BSR is probably the only residue to contact DNA in a sequence-specific manner, although other repeat residues effect repeat activity and specificity.</text>
</comment>
<comment type="domain">
    <text evidence="2">There are at least 4 possible nuclear localization signals, both N- and C-terminal regions contribute to nuclear localization.</text>
</comment>
<comment type="domain">
    <text evidence="7">The C-terminus encodes a plant transcriptional activation domain. Replacement of the 295 last residues of AvrBs3 (AC P14727) with the same region of this protein activates transcription in transformed N.benthamiana leaves.</text>
</comment>
<comment type="disruption phenotype">
    <text evidence="4 5">No alteration in pathogenicity on tomato (S.lycopersicum cv Supermarmande) (PubMed:15225308), another study found decreased pathogenicity on eggplant (S.melongena cv. Zebrina, PubMed:20687809).</text>
</comment>
<comment type="biotechnology">
    <text evidence="9 10 11">By combining the DNA-binding domain with the catalytic domain of the restriction endonuclease FokI, TALE-nuclease (TALEN) enzymes able to target specific dsDNA sequences are created that enable eukaryotic genome modification. Other potential uses as transcriptional repressors, for transposon targeting, DNA methylation or histone tail modifictions are also possible.</text>
</comment>
<comment type="similarity">
    <text evidence="12">Belongs to the transcription activator-like effector (TALE) family. RipTAL/RTL subfamily.</text>
</comment>
<proteinExistence type="evidence at protein level"/>
<reference key="1">
    <citation type="journal article" date="2002" name="Nature">
        <title>Genome sequence of the plant pathogen Ralstonia solanacearum.</title>
        <authorList>
            <person name="Salanoubat M."/>
            <person name="Genin S."/>
            <person name="Artiguenave F."/>
            <person name="Gouzy J."/>
            <person name="Mangenot S."/>
            <person name="Arlat M."/>
            <person name="Billault A."/>
            <person name="Brottier P."/>
            <person name="Camus J.-C."/>
            <person name="Cattolico L."/>
            <person name="Chandler M."/>
            <person name="Choisne N."/>
            <person name="Claudel-Renard C."/>
            <person name="Cunnac S."/>
            <person name="Demange N."/>
            <person name="Gaspin C."/>
            <person name="Lavie M."/>
            <person name="Moisan A."/>
            <person name="Robert C."/>
            <person name="Saurin W."/>
            <person name="Schiex T."/>
            <person name="Siguier P."/>
            <person name="Thebault P."/>
            <person name="Whalen M."/>
            <person name="Wincker P."/>
            <person name="Levy M."/>
            <person name="Weissenbach J."/>
            <person name="Boucher C.A."/>
        </authorList>
    </citation>
    <scope>NUCLEOTIDE SEQUENCE [LARGE SCALE GENOMIC DNA]</scope>
    <source>
        <strain>ATCC BAA-1114 / GMI1000</strain>
    </source>
</reference>
<reference key="2">
    <citation type="journal article" date="2004" name="Mol. Microbiol.">
        <title>Inventory and functional analysis of the large Hrp regulon in Ralstonia solanacearum: identification of novel effector proteins translocated to plant host cells through the type III secretion system.</title>
        <authorList>
            <person name="Cunnac S."/>
            <person name="Occhialini A."/>
            <person name="Barberis P."/>
            <person name="Boucher C."/>
            <person name="Genin S."/>
        </authorList>
    </citation>
    <scope>INDUCTION</scope>
    <scope>DISRUPTION PHENOTYPE</scope>
    <source>
        <strain>ATCC BAA-1114 / GMI1000</strain>
    </source>
</reference>
<reference key="3">
    <citation type="journal article" date="2010" name="Mol. Plant Microbe Interact.">
        <title>A competitive index assay identifies several Ralstonia solanacearum type III effector mutant strains with reduced fitness in host plants.</title>
        <authorList>
            <person name="Macho A.P."/>
            <person name="Guidot A."/>
            <person name="Barberis P."/>
            <person name="Beuzon C.R."/>
            <person name="Genin S."/>
        </authorList>
    </citation>
    <scope>FUNCTION</scope>
    <scope>DISRUPTION PHENOTYPE</scope>
    <source>
        <strain>ATCC BAA-1114 / GMI1000</strain>
    </source>
</reference>
<reference key="4">
    <citation type="journal article" date="2013" name="New Phytol.">
        <title>Breaking the DNA-binding code of Ralstonia solanacearum TAL effectors provides new possibilities to generate plant resistance genes against bacterial wilt disease.</title>
        <authorList>
            <person name="de Lange O."/>
            <person name="Schreiber T."/>
            <person name="Schandry N."/>
            <person name="Radeck J."/>
            <person name="Braun K.H."/>
            <person name="Koszinowski J."/>
            <person name="Heuer H."/>
            <person name="Strauss A."/>
            <person name="Lahaye T."/>
        </authorList>
    </citation>
    <scope>FUNCTION</scope>
    <scope>SUBCELLULAR LOCATION</scope>
    <scope>DOMAIN</scope>
    <scope>BIOTECHNOLOGY</scope>
    <scope>REPEAT</scope>
    <scope>DNA-BINDING</scope>
    <scope>MUTAGENESIS OF LYS-615; ASN-685; LYS-720 AND 1213-THR--THR-1245</scope>
</reference>
<reference key="5">
    <citation type="journal article" date="2013" name="Mol. Plant">
        <title>Characterization and DNA-binding specificities of Ralstonia TAL-like effectors.</title>
        <authorList>
            <person name="Li L."/>
            <person name="Atef A."/>
            <person name="Piatek A."/>
            <person name="Ali Z."/>
            <person name="Piatek M."/>
            <person name="Aouida M."/>
            <person name="Sharakuu A."/>
            <person name="Mahjoub A."/>
            <person name="Wang G."/>
            <person name="Khan S."/>
            <person name="Fedoroff N.V."/>
            <person name="Zhu J.K."/>
            <person name="Mahfouz M.M."/>
        </authorList>
    </citation>
    <scope>SUBCELLULAR LOCATION</scope>
    <scope>DOMAIN</scope>
    <scope>BIOTECHNOLOGY</scope>
    <scope>REPEAT</scope>
</reference>
<reference key="6">
    <citation type="journal article" date="2014" name="Plant J.">
        <title>From dead leaf, to new life: TAL effectors as tools for synthetic biology.</title>
        <authorList>
            <person name="de Lange O."/>
            <person name="Binder A."/>
            <person name="Lahaye T."/>
        </authorList>
    </citation>
    <scope>BIOTECHNOLOGY USES REVIEW</scope>
</reference>
<organism>
    <name type="scientific">Ralstonia nicotianae (strain ATCC BAA-1114 / GMI1000)</name>
    <name type="common">Ralstonia solanacearum</name>
    <dbReference type="NCBI Taxonomy" id="267608"/>
    <lineage>
        <taxon>Bacteria</taxon>
        <taxon>Pseudomonadati</taxon>
        <taxon>Pseudomonadota</taxon>
        <taxon>Betaproteobacteria</taxon>
        <taxon>Burkholderiales</taxon>
        <taxon>Burkholderiaceae</taxon>
        <taxon>Ralstonia</taxon>
        <taxon>Ralstonia solanacearum species complex</taxon>
    </lineage>
</organism>
<gene>
    <name evidence="8" type="primary">brg11</name>
    <name evidence="9" type="synonym">RTL2</name>
    <name type="ordered locus">RSc1815</name>
</gene>
<name>BRG11_RALN1</name>
<sequence>MRIGKSSGWLNESVSLEYEHVSPPTRPRDTRRRPRAAGDGGLAHLHRRLAVGYAEDTPRTEARSPAPRRPLPVAPASAPPAPSLVPEPPMPVSLPAVSSPRFSAGSSAAITDPFPSLPPTPVLYAMARELEALSDATWQPAVPLPAEPPTDARRGNTVFDEASASSPVIASACPQAFASPPRAPRSARARRARTGGDAWPAPTFLSRPSSSRIGRDVFGKLVALGYSREQIRKLKQESLSEIAKYHTTLTGQGFTHADICRISRRRQSLRVVARNYPELAAALPELTRAHIVDIARQRSGDLALQALLPVATALTAAPLRLSASQIATVAQYGERPAIQALYRLRRKLTRAPLHLTPQQVVAIASNTGGKRALEAVCVQLPVLRAAPYRLSTEQVVAIASNKGGKQALEAVKAHLLDLLGAPYVLDTEQVVAIASHNGGKQALEAVKADLLDLRGAPYALSTEQVVAIASHNGGKQALEAVKADLLELRGAPYALSTEQVVAIASHNGGKQALEAVKAHLLDLRGVPYALSTEQVVAIASHNGGKQALEAVKAQLLDLRGAPYALSTAQVVAIASNGGGKQALEGIGEQLLKLRTAPYGLSTEQVVAIASHDGGKQALEAVGAQLVALRAAPYALSTEQVVAIASNKGGKQALEAVKAQLLELRGAPYALSTAQVVAIASHDGGNQALEAVGTQLVALRAAPYALSTEQVVAIASHDGGKQALEAVGAQLVALRAAPYALNTEQVVAIASSHGGKQALEAVRALFPDLRAAPYALSTAQLVAIASNPGGKQALEAVRALFRELRAAPYALSTEQVVAIASNHGGKQALEAVRALFRGLRAAPYGLSTAQVVAIASSNGGKQALEAVWALLPVLRATPYDLNTAQIVAIASHDGGKPALEAVWAKLPVLRGAPYALSTAQVVAIACISGQQALEAIEAHMPTLRQASHSLSPERVAAIACIGGRSAVEAVRQGLPVKAIRRIRREKAPVAGPPPASLGPTPQELVAVLHFFRAHQQPRQAFVDALAAFQATRPALLRLLSSVGVTEIEALGGTIPDATERWQRLLGRLGFRPATGAAAPSPDSLQGFAQSLERTLGSPGMAGQSACSPHRKRPAETAIAPRSIRRSPNNAGQPSEPWPDQLAWLQRRKRTARSHIRADSAASVPANLHLGTRAQFTPDRLRAEPGPIMQAHTSPASVSFGSHVAFEPGLPDPGTPTSADLASFEAEPFGVGPLDFHLDWLLQILET</sequence>